<proteinExistence type="inferred from homology"/>
<reference key="1">
    <citation type="journal article" date="2002" name="Proc. Natl. Acad. Sci. U.S.A.">
        <title>Genome sequence of the hyperthermophilic crenarchaeon Pyrobaculum aerophilum.</title>
        <authorList>
            <person name="Fitz-Gibbon S.T."/>
            <person name="Ladner H."/>
            <person name="Kim U.-J."/>
            <person name="Stetter K.O."/>
            <person name="Simon M.I."/>
            <person name="Miller J.H."/>
        </authorList>
    </citation>
    <scope>NUCLEOTIDE SEQUENCE [LARGE SCALE GENOMIC DNA]</scope>
    <source>
        <strain>ATCC 51768 / DSM 7523 / JCM 9630 / CIP 104966 / NBRC 100827 / IM2</strain>
    </source>
</reference>
<name>EF2_PYRAE</name>
<dbReference type="EMBL" id="AE009441">
    <property type="protein sequence ID" value="AAL62720.1"/>
    <property type="molecule type" value="Genomic_DNA"/>
</dbReference>
<dbReference type="RefSeq" id="WP_011007192.1">
    <property type="nucleotide sequence ID" value="NC_003364.1"/>
</dbReference>
<dbReference type="SMR" id="Q8ZZC1"/>
<dbReference type="FunCoup" id="Q8ZZC1">
    <property type="interactions" value="211"/>
</dbReference>
<dbReference type="STRING" id="178306.PAE0332"/>
<dbReference type="EnsemblBacteria" id="AAL62720">
    <property type="protein sequence ID" value="AAL62720"/>
    <property type="gene ID" value="PAE0332"/>
</dbReference>
<dbReference type="GeneID" id="1464940"/>
<dbReference type="KEGG" id="pai:PAE0332"/>
<dbReference type="PATRIC" id="fig|178306.9.peg.253"/>
<dbReference type="eggNOG" id="arCOG01559">
    <property type="taxonomic scope" value="Archaea"/>
</dbReference>
<dbReference type="HOGENOM" id="CLU_002794_11_1_2"/>
<dbReference type="InParanoid" id="Q8ZZC1"/>
<dbReference type="Proteomes" id="UP000002439">
    <property type="component" value="Chromosome"/>
</dbReference>
<dbReference type="GO" id="GO:0005829">
    <property type="term" value="C:cytosol"/>
    <property type="evidence" value="ECO:0000318"/>
    <property type="project" value="GO_Central"/>
</dbReference>
<dbReference type="GO" id="GO:1990904">
    <property type="term" value="C:ribonucleoprotein complex"/>
    <property type="evidence" value="ECO:0000318"/>
    <property type="project" value="GO_Central"/>
</dbReference>
<dbReference type="GO" id="GO:0005525">
    <property type="term" value="F:GTP binding"/>
    <property type="evidence" value="ECO:0007669"/>
    <property type="project" value="UniProtKB-UniRule"/>
</dbReference>
<dbReference type="GO" id="GO:0003924">
    <property type="term" value="F:GTPase activity"/>
    <property type="evidence" value="ECO:0000318"/>
    <property type="project" value="GO_Central"/>
</dbReference>
<dbReference type="GO" id="GO:0003746">
    <property type="term" value="F:translation elongation factor activity"/>
    <property type="evidence" value="ECO:0000318"/>
    <property type="project" value="GO_Central"/>
</dbReference>
<dbReference type="GO" id="GO:0006414">
    <property type="term" value="P:translational elongation"/>
    <property type="evidence" value="ECO:0000318"/>
    <property type="project" value="GO_Central"/>
</dbReference>
<dbReference type="CDD" id="cd01681">
    <property type="entry name" value="aeEF2_snRNP_like_IV"/>
    <property type="match status" value="1"/>
</dbReference>
<dbReference type="CDD" id="cd01885">
    <property type="entry name" value="EF2"/>
    <property type="match status" value="1"/>
</dbReference>
<dbReference type="CDD" id="cd16268">
    <property type="entry name" value="EF2_II"/>
    <property type="match status" value="1"/>
</dbReference>
<dbReference type="CDD" id="cd16261">
    <property type="entry name" value="EF2_snRNP_III"/>
    <property type="match status" value="1"/>
</dbReference>
<dbReference type="CDD" id="cd01514">
    <property type="entry name" value="Elongation_Factor_C"/>
    <property type="match status" value="1"/>
</dbReference>
<dbReference type="FunFam" id="3.30.230.10:FF:000009">
    <property type="entry name" value="116 kDa U5 small nuclear ribonucleoprotein component"/>
    <property type="match status" value="1"/>
</dbReference>
<dbReference type="FunFam" id="3.30.70.240:FF:000010">
    <property type="entry name" value="Elongation factor 2"/>
    <property type="match status" value="1"/>
</dbReference>
<dbReference type="FunFam" id="3.30.70.870:FF:000002">
    <property type="entry name" value="Translation elongation factor 2"/>
    <property type="match status" value="1"/>
</dbReference>
<dbReference type="Gene3D" id="3.30.230.10">
    <property type="match status" value="1"/>
</dbReference>
<dbReference type="Gene3D" id="3.30.70.240">
    <property type="match status" value="1"/>
</dbReference>
<dbReference type="Gene3D" id="3.30.70.870">
    <property type="entry name" value="Elongation Factor G (Translational Gtpase), domain 3"/>
    <property type="match status" value="1"/>
</dbReference>
<dbReference type="Gene3D" id="3.40.50.300">
    <property type="entry name" value="P-loop containing nucleotide triphosphate hydrolases"/>
    <property type="match status" value="1"/>
</dbReference>
<dbReference type="Gene3D" id="2.40.30.10">
    <property type="entry name" value="Translation factors"/>
    <property type="match status" value="1"/>
</dbReference>
<dbReference type="HAMAP" id="MF_00054_A">
    <property type="entry name" value="EF_G_EF_2_A"/>
    <property type="match status" value="1"/>
</dbReference>
<dbReference type="InterPro" id="IPR041095">
    <property type="entry name" value="EFG_II"/>
</dbReference>
<dbReference type="InterPro" id="IPR035647">
    <property type="entry name" value="EFG_III/V"/>
</dbReference>
<dbReference type="InterPro" id="IPR000640">
    <property type="entry name" value="EFG_V-like"/>
</dbReference>
<dbReference type="InterPro" id="IPR004161">
    <property type="entry name" value="EFTu-like_2"/>
</dbReference>
<dbReference type="InterPro" id="IPR027417">
    <property type="entry name" value="P-loop_NTPase"/>
</dbReference>
<dbReference type="InterPro" id="IPR020568">
    <property type="entry name" value="Ribosomal_Su5_D2-typ_SF"/>
</dbReference>
<dbReference type="InterPro" id="IPR014721">
    <property type="entry name" value="Ribsml_uS5_D2-typ_fold_subgr"/>
</dbReference>
<dbReference type="InterPro" id="IPR005225">
    <property type="entry name" value="Small_GTP-bd"/>
</dbReference>
<dbReference type="InterPro" id="IPR000795">
    <property type="entry name" value="T_Tr_GTP-bd_dom"/>
</dbReference>
<dbReference type="InterPro" id="IPR009000">
    <property type="entry name" value="Transl_B-barrel_sf"/>
</dbReference>
<dbReference type="InterPro" id="IPR004543">
    <property type="entry name" value="Transl_elong_EFG/EF2_arc"/>
</dbReference>
<dbReference type="InterPro" id="IPR005517">
    <property type="entry name" value="Transl_elong_EFG/EF2_IV"/>
</dbReference>
<dbReference type="NCBIfam" id="TIGR00490">
    <property type="entry name" value="aEF-2"/>
    <property type="match status" value="1"/>
</dbReference>
<dbReference type="NCBIfam" id="TIGR00231">
    <property type="entry name" value="small_GTP"/>
    <property type="match status" value="1"/>
</dbReference>
<dbReference type="PANTHER" id="PTHR42908:SF3">
    <property type="entry name" value="ELONGATION FACTOR-LIKE GTPASE 1"/>
    <property type="match status" value="1"/>
</dbReference>
<dbReference type="PANTHER" id="PTHR42908">
    <property type="entry name" value="TRANSLATION ELONGATION FACTOR-RELATED"/>
    <property type="match status" value="1"/>
</dbReference>
<dbReference type="Pfam" id="PF00679">
    <property type="entry name" value="EFG_C"/>
    <property type="match status" value="1"/>
</dbReference>
<dbReference type="Pfam" id="PF14492">
    <property type="entry name" value="EFG_III"/>
    <property type="match status" value="1"/>
</dbReference>
<dbReference type="Pfam" id="PF03764">
    <property type="entry name" value="EFG_IV"/>
    <property type="match status" value="1"/>
</dbReference>
<dbReference type="Pfam" id="PF00009">
    <property type="entry name" value="GTP_EFTU"/>
    <property type="match status" value="1"/>
</dbReference>
<dbReference type="Pfam" id="PF03144">
    <property type="entry name" value="GTP_EFTU_D2"/>
    <property type="match status" value="1"/>
</dbReference>
<dbReference type="PRINTS" id="PR00315">
    <property type="entry name" value="ELONGATNFCT"/>
</dbReference>
<dbReference type="SMART" id="SM00838">
    <property type="entry name" value="EFG_C"/>
    <property type="match status" value="1"/>
</dbReference>
<dbReference type="SMART" id="SM00889">
    <property type="entry name" value="EFG_IV"/>
    <property type="match status" value="1"/>
</dbReference>
<dbReference type="SUPFAM" id="SSF54980">
    <property type="entry name" value="EF-G C-terminal domain-like"/>
    <property type="match status" value="2"/>
</dbReference>
<dbReference type="SUPFAM" id="SSF52540">
    <property type="entry name" value="P-loop containing nucleoside triphosphate hydrolases"/>
    <property type="match status" value="1"/>
</dbReference>
<dbReference type="SUPFAM" id="SSF54211">
    <property type="entry name" value="Ribosomal protein S5 domain 2-like"/>
    <property type="match status" value="1"/>
</dbReference>
<dbReference type="SUPFAM" id="SSF50447">
    <property type="entry name" value="Translation proteins"/>
    <property type="match status" value="1"/>
</dbReference>
<dbReference type="PROSITE" id="PS51722">
    <property type="entry name" value="G_TR_2"/>
    <property type="match status" value="1"/>
</dbReference>
<feature type="chain" id="PRO_0000091042" description="Elongation factor 2">
    <location>
        <begin position="1"/>
        <end position="740"/>
    </location>
</feature>
<feature type="domain" description="tr-type G">
    <location>
        <begin position="23"/>
        <end position="264"/>
    </location>
</feature>
<feature type="binding site" evidence="1">
    <location>
        <begin position="32"/>
        <end position="39"/>
    </location>
    <ligand>
        <name>GTP</name>
        <dbReference type="ChEBI" id="CHEBI:37565"/>
    </ligand>
</feature>
<feature type="binding site" evidence="1">
    <location>
        <begin position="98"/>
        <end position="102"/>
    </location>
    <ligand>
        <name>GTP</name>
        <dbReference type="ChEBI" id="CHEBI:37565"/>
    </ligand>
</feature>
<feature type="binding site" evidence="1">
    <location>
        <begin position="152"/>
        <end position="155"/>
    </location>
    <ligand>
        <name>GTP</name>
        <dbReference type="ChEBI" id="CHEBI:37565"/>
    </ligand>
</feature>
<feature type="modified residue" description="Diphthamide" evidence="1">
    <location>
        <position position="605"/>
    </location>
</feature>
<gene>
    <name evidence="1" type="primary">fusA</name>
    <name type="ordered locus">PAE0332</name>
</gene>
<keyword id="KW-0963">Cytoplasm</keyword>
<keyword id="KW-0251">Elongation factor</keyword>
<keyword id="KW-0342">GTP-binding</keyword>
<keyword id="KW-0547">Nucleotide-binding</keyword>
<keyword id="KW-0648">Protein biosynthesis</keyword>
<keyword id="KW-1185">Reference proteome</keyword>
<sequence length="740" mass="83150">MSSAVRIVEKQLDEILAIAKNPAQIRNAGTLAHVDHGKTTTSDSLLMGAGLLSPKVAGKALAMDYVPIEQLRQMTVKAANISLYFEYGGKPYLINFVDTPGHVDFTGHVTRSLRVMDGGLVVVDAVEGVMTQTETVVRQALEEYVRPVLFINKIDRLIKELRLSPQEIQQRILTIVKDFNALIDMFAPPEFKDKWKIDPGKGQMALGSALHKWGITIPMAQKAGIKFSNIVDAYEKGYVDQLAQEFPLYKTILSMIIEHIPPPNVAQKYRIPRLWRGELNSEVGKALLEADPNGPTVIAVSKVNKDPHAGLIATGRVFSGTIREGDEVYIIGRRLKKKVLQTYIYMGPSRIIVPYMPAGNIVALMGVDEARAGDTLVDPKFSEIPPFEKMRYISEPVVTVAIEPKNPAELARLVEALKDLVVEDPTLDLKIDQETGQILLSGVGTLHLEIATWLLKERTKTEFTVSPPLIRFRETVRERSQVWEGKSPNKHNRLYFYVEPLDETTIELIASREITEDQEPRERAKILREKAGWDTDEARGIWAIDDRYFNVIVDKTSGIQYLREIRDYIVQGFRWSMEAGPLAQEPMRGVKVVLVDAVVHEDPAHRGPAQIMPATKNAIFAAVLSARPTLLEPLMRLDIKVAPDYIGAVTSVLNKHRGKILDMTQQEYMAFLRAELPVLESFNISDELRAAAAGKIFWSMQFARWAPFPESMLGDFVKQLRKKKGLKEEIPKPTDFVEVY</sequence>
<organism>
    <name type="scientific">Pyrobaculum aerophilum (strain ATCC 51768 / DSM 7523 / JCM 9630 / CIP 104966 / NBRC 100827 / IM2)</name>
    <dbReference type="NCBI Taxonomy" id="178306"/>
    <lineage>
        <taxon>Archaea</taxon>
        <taxon>Thermoproteota</taxon>
        <taxon>Thermoprotei</taxon>
        <taxon>Thermoproteales</taxon>
        <taxon>Thermoproteaceae</taxon>
        <taxon>Pyrobaculum</taxon>
    </lineage>
</organism>
<evidence type="ECO:0000255" key="1">
    <source>
        <dbReference type="HAMAP-Rule" id="MF_00054"/>
    </source>
</evidence>
<protein>
    <recommendedName>
        <fullName evidence="1">Elongation factor 2</fullName>
        <shortName evidence="1">EF-2</shortName>
    </recommendedName>
</protein>
<comment type="function">
    <text evidence="1">Catalyzes the GTP-dependent ribosomal translocation step during translation elongation. During this step, the ribosome changes from the pre-translocational (PRE) to the post-translocational (POST) state as the newly formed A-site-bound peptidyl-tRNA and P-site-bound deacylated tRNA move to the P and E sites, respectively. Catalyzes the coordinated movement of the two tRNA molecules, the mRNA and conformational changes in the ribosome.</text>
</comment>
<comment type="subcellular location">
    <subcellularLocation>
        <location evidence="1">Cytoplasm</location>
    </subcellularLocation>
</comment>
<comment type="similarity">
    <text evidence="1">Belongs to the TRAFAC class translation factor GTPase superfamily. Classic translation factor GTPase family. EF-G/EF-2 subfamily.</text>
</comment>
<accession>Q8ZZC1</accession>